<proteinExistence type="inferred from homology"/>
<sequence>MTKFIFVTGGVVSSLGKGIAAASIAAILESRGLNVTMLKLDPYINVDPGTMSPFQHGEVFVTDDGAETDLDLGHYERFIDSTMTRRNSFSTGQVYENVIAKERRGDYLGGTVQVIPHITDEIKRRIHEGAAGYDVAIVEIGGTVGDIESLPFLEAIRQMRSQLGRNNTLFAHLSYVPYIAAAGEIKTKPTQHTVKEMLSIGLQPDILICRMDRTMPADERRKIALFCNVEERAIVGSYDVDSIYECPEMLHDQGIDNIITEQLQLNVQQADLTAWKKIVHAIQNPKHTVKIAMVGKYVDLTESYKSLIEALKHAGVHTETDVQITFVDSESIEKNNGDVSMLKDMDAILVPGGFGSRGVEGKIAAVRYARENNVPYLGICLGMQIALIEYARDVAGLKGANSTEFDLKCAAPVVALIDEWQTADGSVETRDESADLGGTMRLGAQEVELKAGSLAAKIYGSEHIRERHRHRYEVNNNYVPTLEQAGLVIGGVSAGRERLVETIELPNHPWFFACQFHPEFTSNPRKGHPLFTAFVKAALNNKKA</sequence>
<dbReference type="EC" id="6.3.4.2" evidence="1"/>
<dbReference type="EMBL" id="AL157959">
    <property type="protein sequence ID" value="CAM08870.1"/>
    <property type="molecule type" value="Genomic_DNA"/>
</dbReference>
<dbReference type="PIR" id="F81798">
    <property type="entry name" value="F81798"/>
</dbReference>
<dbReference type="RefSeq" id="WP_002239883.1">
    <property type="nucleotide sequence ID" value="NC_003116.1"/>
</dbReference>
<dbReference type="SMR" id="Q9JTK1"/>
<dbReference type="EnsemblBacteria" id="CAM08870">
    <property type="protein sequence ID" value="CAM08870"/>
    <property type="gene ID" value="NMA1742"/>
</dbReference>
<dbReference type="KEGG" id="nma:NMA1742"/>
<dbReference type="HOGENOM" id="CLU_011675_5_0_4"/>
<dbReference type="UniPathway" id="UPA00159">
    <property type="reaction ID" value="UER00277"/>
</dbReference>
<dbReference type="Proteomes" id="UP000000626">
    <property type="component" value="Chromosome"/>
</dbReference>
<dbReference type="GO" id="GO:0005829">
    <property type="term" value="C:cytosol"/>
    <property type="evidence" value="ECO:0007669"/>
    <property type="project" value="TreeGrafter"/>
</dbReference>
<dbReference type="GO" id="GO:0005524">
    <property type="term" value="F:ATP binding"/>
    <property type="evidence" value="ECO:0007669"/>
    <property type="project" value="UniProtKB-KW"/>
</dbReference>
<dbReference type="GO" id="GO:0003883">
    <property type="term" value="F:CTP synthase activity"/>
    <property type="evidence" value="ECO:0007669"/>
    <property type="project" value="UniProtKB-UniRule"/>
</dbReference>
<dbReference type="GO" id="GO:0004359">
    <property type="term" value="F:glutaminase activity"/>
    <property type="evidence" value="ECO:0007669"/>
    <property type="project" value="RHEA"/>
</dbReference>
<dbReference type="GO" id="GO:0042802">
    <property type="term" value="F:identical protein binding"/>
    <property type="evidence" value="ECO:0007669"/>
    <property type="project" value="TreeGrafter"/>
</dbReference>
<dbReference type="GO" id="GO:0046872">
    <property type="term" value="F:metal ion binding"/>
    <property type="evidence" value="ECO:0007669"/>
    <property type="project" value="UniProtKB-KW"/>
</dbReference>
<dbReference type="GO" id="GO:0044210">
    <property type="term" value="P:'de novo' CTP biosynthetic process"/>
    <property type="evidence" value="ECO:0007669"/>
    <property type="project" value="UniProtKB-UniRule"/>
</dbReference>
<dbReference type="GO" id="GO:0019856">
    <property type="term" value="P:pyrimidine nucleobase biosynthetic process"/>
    <property type="evidence" value="ECO:0007669"/>
    <property type="project" value="TreeGrafter"/>
</dbReference>
<dbReference type="CDD" id="cd03113">
    <property type="entry name" value="CTPS_N"/>
    <property type="match status" value="1"/>
</dbReference>
<dbReference type="CDD" id="cd01746">
    <property type="entry name" value="GATase1_CTP_Synthase"/>
    <property type="match status" value="1"/>
</dbReference>
<dbReference type="FunFam" id="3.40.50.300:FF:000009">
    <property type="entry name" value="CTP synthase"/>
    <property type="match status" value="1"/>
</dbReference>
<dbReference type="FunFam" id="3.40.50.880:FF:000002">
    <property type="entry name" value="CTP synthase"/>
    <property type="match status" value="1"/>
</dbReference>
<dbReference type="Gene3D" id="3.40.50.880">
    <property type="match status" value="1"/>
</dbReference>
<dbReference type="Gene3D" id="3.40.50.300">
    <property type="entry name" value="P-loop containing nucleotide triphosphate hydrolases"/>
    <property type="match status" value="1"/>
</dbReference>
<dbReference type="HAMAP" id="MF_01227">
    <property type="entry name" value="PyrG"/>
    <property type="match status" value="1"/>
</dbReference>
<dbReference type="InterPro" id="IPR029062">
    <property type="entry name" value="Class_I_gatase-like"/>
</dbReference>
<dbReference type="InterPro" id="IPR004468">
    <property type="entry name" value="CTP_synthase"/>
</dbReference>
<dbReference type="InterPro" id="IPR017456">
    <property type="entry name" value="CTP_synthase_N"/>
</dbReference>
<dbReference type="InterPro" id="IPR017926">
    <property type="entry name" value="GATASE"/>
</dbReference>
<dbReference type="InterPro" id="IPR033828">
    <property type="entry name" value="GATase1_CTP_Synthase"/>
</dbReference>
<dbReference type="InterPro" id="IPR027417">
    <property type="entry name" value="P-loop_NTPase"/>
</dbReference>
<dbReference type="NCBIfam" id="NF003792">
    <property type="entry name" value="PRK05380.1"/>
    <property type="match status" value="1"/>
</dbReference>
<dbReference type="NCBIfam" id="TIGR00337">
    <property type="entry name" value="PyrG"/>
    <property type="match status" value="1"/>
</dbReference>
<dbReference type="PANTHER" id="PTHR11550">
    <property type="entry name" value="CTP SYNTHASE"/>
    <property type="match status" value="1"/>
</dbReference>
<dbReference type="PANTHER" id="PTHR11550:SF0">
    <property type="entry name" value="CTP SYNTHASE-RELATED"/>
    <property type="match status" value="1"/>
</dbReference>
<dbReference type="Pfam" id="PF06418">
    <property type="entry name" value="CTP_synth_N"/>
    <property type="match status" value="1"/>
</dbReference>
<dbReference type="Pfam" id="PF00117">
    <property type="entry name" value="GATase"/>
    <property type="match status" value="1"/>
</dbReference>
<dbReference type="SUPFAM" id="SSF52317">
    <property type="entry name" value="Class I glutamine amidotransferase-like"/>
    <property type="match status" value="1"/>
</dbReference>
<dbReference type="SUPFAM" id="SSF52540">
    <property type="entry name" value="P-loop containing nucleoside triphosphate hydrolases"/>
    <property type="match status" value="1"/>
</dbReference>
<dbReference type="PROSITE" id="PS51273">
    <property type="entry name" value="GATASE_TYPE_1"/>
    <property type="match status" value="1"/>
</dbReference>
<accession>Q9JTK1</accession>
<accession>A1ISV8</accession>
<protein>
    <recommendedName>
        <fullName evidence="1">CTP synthase</fullName>
        <ecNumber evidence="1">6.3.4.2</ecNumber>
    </recommendedName>
    <alternativeName>
        <fullName evidence="1">Cytidine 5'-triphosphate synthase</fullName>
    </alternativeName>
    <alternativeName>
        <fullName evidence="1">Cytidine triphosphate synthetase</fullName>
        <shortName evidence="1">CTP synthetase</shortName>
        <shortName evidence="1">CTPS</shortName>
    </alternativeName>
    <alternativeName>
        <fullName evidence="1">UTP--ammonia ligase</fullName>
    </alternativeName>
</protein>
<reference key="1">
    <citation type="journal article" date="2000" name="Nature">
        <title>Complete DNA sequence of a serogroup A strain of Neisseria meningitidis Z2491.</title>
        <authorList>
            <person name="Parkhill J."/>
            <person name="Achtman M."/>
            <person name="James K.D."/>
            <person name="Bentley S.D."/>
            <person name="Churcher C.M."/>
            <person name="Klee S.R."/>
            <person name="Morelli G."/>
            <person name="Basham D."/>
            <person name="Brown D."/>
            <person name="Chillingworth T."/>
            <person name="Davies R.M."/>
            <person name="Davis P."/>
            <person name="Devlin K."/>
            <person name="Feltwell T."/>
            <person name="Hamlin N."/>
            <person name="Holroyd S."/>
            <person name="Jagels K."/>
            <person name="Leather S."/>
            <person name="Moule S."/>
            <person name="Mungall K.L."/>
            <person name="Quail M.A."/>
            <person name="Rajandream M.A."/>
            <person name="Rutherford K.M."/>
            <person name="Simmonds M."/>
            <person name="Skelton J."/>
            <person name="Whitehead S."/>
            <person name="Spratt B.G."/>
            <person name="Barrell B.G."/>
        </authorList>
    </citation>
    <scope>NUCLEOTIDE SEQUENCE [LARGE SCALE GENOMIC DNA]</scope>
    <source>
        <strain>DSM 15465 / Z2491</strain>
    </source>
</reference>
<organism>
    <name type="scientific">Neisseria meningitidis serogroup A / serotype 4A (strain DSM 15465 / Z2491)</name>
    <dbReference type="NCBI Taxonomy" id="122587"/>
    <lineage>
        <taxon>Bacteria</taxon>
        <taxon>Pseudomonadati</taxon>
        <taxon>Pseudomonadota</taxon>
        <taxon>Betaproteobacteria</taxon>
        <taxon>Neisseriales</taxon>
        <taxon>Neisseriaceae</taxon>
        <taxon>Neisseria</taxon>
    </lineage>
</organism>
<feature type="chain" id="PRO_0000138205" description="CTP synthase">
    <location>
        <begin position="1"/>
        <end position="544"/>
    </location>
</feature>
<feature type="domain" description="Glutamine amidotransferase type-1" evidence="1">
    <location>
        <begin position="290"/>
        <end position="544"/>
    </location>
</feature>
<feature type="region of interest" description="Amidoligase domain" evidence="1">
    <location>
        <begin position="1"/>
        <end position="265"/>
    </location>
</feature>
<feature type="active site" description="Nucleophile; for glutamine hydrolysis" evidence="1">
    <location>
        <position position="380"/>
    </location>
</feature>
<feature type="active site" evidence="1">
    <location>
        <position position="517"/>
    </location>
</feature>
<feature type="active site" evidence="1">
    <location>
        <position position="519"/>
    </location>
</feature>
<feature type="binding site" evidence="1">
    <location>
        <position position="13"/>
    </location>
    <ligand>
        <name>CTP</name>
        <dbReference type="ChEBI" id="CHEBI:37563"/>
        <note>allosteric inhibitor</note>
    </ligand>
</feature>
<feature type="binding site" evidence="1">
    <location>
        <position position="13"/>
    </location>
    <ligand>
        <name>UTP</name>
        <dbReference type="ChEBI" id="CHEBI:46398"/>
    </ligand>
</feature>
<feature type="binding site" evidence="1">
    <location>
        <begin position="14"/>
        <end position="19"/>
    </location>
    <ligand>
        <name>ATP</name>
        <dbReference type="ChEBI" id="CHEBI:30616"/>
    </ligand>
</feature>
<feature type="binding site" evidence="1">
    <location>
        <position position="71"/>
    </location>
    <ligand>
        <name>ATP</name>
        <dbReference type="ChEBI" id="CHEBI:30616"/>
    </ligand>
</feature>
<feature type="binding site" evidence="1">
    <location>
        <position position="71"/>
    </location>
    <ligand>
        <name>Mg(2+)</name>
        <dbReference type="ChEBI" id="CHEBI:18420"/>
    </ligand>
</feature>
<feature type="binding site" evidence="1">
    <location>
        <position position="139"/>
    </location>
    <ligand>
        <name>Mg(2+)</name>
        <dbReference type="ChEBI" id="CHEBI:18420"/>
    </ligand>
</feature>
<feature type="binding site" evidence="1">
    <location>
        <begin position="146"/>
        <end position="148"/>
    </location>
    <ligand>
        <name>CTP</name>
        <dbReference type="ChEBI" id="CHEBI:37563"/>
        <note>allosteric inhibitor</note>
    </ligand>
</feature>
<feature type="binding site" evidence="1">
    <location>
        <begin position="186"/>
        <end position="191"/>
    </location>
    <ligand>
        <name>CTP</name>
        <dbReference type="ChEBI" id="CHEBI:37563"/>
        <note>allosteric inhibitor</note>
    </ligand>
</feature>
<feature type="binding site" evidence="1">
    <location>
        <begin position="186"/>
        <end position="191"/>
    </location>
    <ligand>
        <name>UTP</name>
        <dbReference type="ChEBI" id="CHEBI:46398"/>
    </ligand>
</feature>
<feature type="binding site" evidence="1">
    <location>
        <position position="222"/>
    </location>
    <ligand>
        <name>CTP</name>
        <dbReference type="ChEBI" id="CHEBI:37563"/>
        <note>allosteric inhibitor</note>
    </ligand>
</feature>
<feature type="binding site" evidence="1">
    <location>
        <position position="222"/>
    </location>
    <ligand>
        <name>UTP</name>
        <dbReference type="ChEBI" id="CHEBI:46398"/>
    </ligand>
</feature>
<feature type="binding site" evidence="1">
    <location>
        <position position="353"/>
    </location>
    <ligand>
        <name>L-glutamine</name>
        <dbReference type="ChEBI" id="CHEBI:58359"/>
    </ligand>
</feature>
<feature type="binding site" evidence="1">
    <location>
        <begin position="381"/>
        <end position="384"/>
    </location>
    <ligand>
        <name>L-glutamine</name>
        <dbReference type="ChEBI" id="CHEBI:58359"/>
    </ligand>
</feature>
<feature type="binding site" evidence="1">
    <location>
        <position position="404"/>
    </location>
    <ligand>
        <name>L-glutamine</name>
        <dbReference type="ChEBI" id="CHEBI:58359"/>
    </ligand>
</feature>
<feature type="binding site" evidence="1">
    <location>
        <position position="471"/>
    </location>
    <ligand>
        <name>L-glutamine</name>
        <dbReference type="ChEBI" id="CHEBI:58359"/>
    </ligand>
</feature>
<name>PYRG_NEIMA</name>
<evidence type="ECO:0000255" key="1">
    <source>
        <dbReference type="HAMAP-Rule" id="MF_01227"/>
    </source>
</evidence>
<keyword id="KW-0067">ATP-binding</keyword>
<keyword id="KW-0315">Glutamine amidotransferase</keyword>
<keyword id="KW-0436">Ligase</keyword>
<keyword id="KW-0460">Magnesium</keyword>
<keyword id="KW-0479">Metal-binding</keyword>
<keyword id="KW-0547">Nucleotide-binding</keyword>
<keyword id="KW-0665">Pyrimidine biosynthesis</keyword>
<gene>
    <name evidence="1" type="primary">pyrG</name>
    <name type="ordered locus">NMA1742</name>
</gene>
<comment type="function">
    <text evidence="1">Catalyzes the ATP-dependent amination of UTP to CTP with either L-glutamine or ammonia as the source of nitrogen. Regulates intracellular CTP levels through interactions with the four ribonucleotide triphosphates.</text>
</comment>
<comment type="catalytic activity">
    <reaction evidence="1">
        <text>UTP + L-glutamine + ATP + H2O = CTP + L-glutamate + ADP + phosphate + 2 H(+)</text>
        <dbReference type="Rhea" id="RHEA:26426"/>
        <dbReference type="ChEBI" id="CHEBI:15377"/>
        <dbReference type="ChEBI" id="CHEBI:15378"/>
        <dbReference type="ChEBI" id="CHEBI:29985"/>
        <dbReference type="ChEBI" id="CHEBI:30616"/>
        <dbReference type="ChEBI" id="CHEBI:37563"/>
        <dbReference type="ChEBI" id="CHEBI:43474"/>
        <dbReference type="ChEBI" id="CHEBI:46398"/>
        <dbReference type="ChEBI" id="CHEBI:58359"/>
        <dbReference type="ChEBI" id="CHEBI:456216"/>
        <dbReference type="EC" id="6.3.4.2"/>
    </reaction>
</comment>
<comment type="catalytic activity">
    <reaction evidence="1">
        <text>L-glutamine + H2O = L-glutamate + NH4(+)</text>
        <dbReference type="Rhea" id="RHEA:15889"/>
        <dbReference type="ChEBI" id="CHEBI:15377"/>
        <dbReference type="ChEBI" id="CHEBI:28938"/>
        <dbReference type="ChEBI" id="CHEBI:29985"/>
        <dbReference type="ChEBI" id="CHEBI:58359"/>
    </reaction>
</comment>
<comment type="catalytic activity">
    <reaction evidence="1">
        <text>UTP + NH4(+) + ATP = CTP + ADP + phosphate + 2 H(+)</text>
        <dbReference type="Rhea" id="RHEA:16597"/>
        <dbReference type="ChEBI" id="CHEBI:15378"/>
        <dbReference type="ChEBI" id="CHEBI:28938"/>
        <dbReference type="ChEBI" id="CHEBI:30616"/>
        <dbReference type="ChEBI" id="CHEBI:37563"/>
        <dbReference type="ChEBI" id="CHEBI:43474"/>
        <dbReference type="ChEBI" id="CHEBI:46398"/>
        <dbReference type="ChEBI" id="CHEBI:456216"/>
    </reaction>
</comment>
<comment type="activity regulation">
    <text evidence="1">Allosterically activated by GTP, when glutamine is the substrate; GTP has no effect on the reaction when ammonia is the substrate. The allosteric effector GTP functions by stabilizing the protein conformation that binds the tetrahedral intermediate(s) formed during glutamine hydrolysis. Inhibited by the product CTP, via allosteric rather than competitive inhibition.</text>
</comment>
<comment type="pathway">
    <text evidence="1">Pyrimidine metabolism; CTP biosynthesis via de novo pathway; CTP from UDP: step 2/2.</text>
</comment>
<comment type="subunit">
    <text evidence="1">Homotetramer.</text>
</comment>
<comment type="miscellaneous">
    <text evidence="1">CTPSs have evolved a hybrid strategy for distinguishing between UTP and CTP. The overlapping regions of the product feedback inhibitory and substrate sites recognize a common feature in both compounds, the triphosphate moiety. To differentiate isosteric substrate and product pyrimidine rings, an additional pocket far from the expected kinase/ligase catalytic site, specifically recognizes the cytosine and ribose portions of the product inhibitor.</text>
</comment>
<comment type="similarity">
    <text evidence="1">Belongs to the CTP synthase family.</text>
</comment>